<reference key="1">
    <citation type="journal article" date="2008" name="J. Bacteriol.">
        <title>The pangenome structure of Escherichia coli: comparative genomic analysis of E. coli commensal and pathogenic isolates.</title>
        <authorList>
            <person name="Rasko D.A."/>
            <person name="Rosovitz M.J."/>
            <person name="Myers G.S.A."/>
            <person name="Mongodin E.F."/>
            <person name="Fricke W.F."/>
            <person name="Gajer P."/>
            <person name="Crabtree J."/>
            <person name="Sebaihia M."/>
            <person name="Thomson N.R."/>
            <person name="Chaudhuri R."/>
            <person name="Henderson I.R."/>
            <person name="Sperandio V."/>
            <person name="Ravel J."/>
        </authorList>
    </citation>
    <scope>NUCLEOTIDE SEQUENCE [LARGE SCALE GENOMIC DNA]</scope>
    <source>
        <strain>HS</strain>
    </source>
</reference>
<accession>A8A2I9</accession>
<proteinExistence type="inferred from homology"/>
<comment type="function">
    <text evidence="1">Catalyzes the oxidation of erythronate-4-phosphate to 3-hydroxy-2-oxo-4-phosphonooxybutanoate.</text>
</comment>
<comment type="catalytic activity">
    <reaction evidence="1">
        <text>4-phospho-D-erythronate + NAD(+) = (R)-3-hydroxy-2-oxo-4-phosphooxybutanoate + NADH + H(+)</text>
        <dbReference type="Rhea" id="RHEA:18829"/>
        <dbReference type="ChEBI" id="CHEBI:15378"/>
        <dbReference type="ChEBI" id="CHEBI:57540"/>
        <dbReference type="ChEBI" id="CHEBI:57945"/>
        <dbReference type="ChEBI" id="CHEBI:58538"/>
        <dbReference type="ChEBI" id="CHEBI:58766"/>
        <dbReference type="EC" id="1.1.1.290"/>
    </reaction>
</comment>
<comment type="pathway">
    <text evidence="1">Cofactor biosynthesis; pyridoxine 5'-phosphate biosynthesis; pyridoxine 5'-phosphate from D-erythrose 4-phosphate: step 2/5.</text>
</comment>
<comment type="subunit">
    <text evidence="1">Homodimer.</text>
</comment>
<comment type="subcellular location">
    <subcellularLocation>
        <location evidence="1">Cytoplasm</location>
    </subcellularLocation>
</comment>
<comment type="similarity">
    <text evidence="1">Belongs to the D-isomer specific 2-hydroxyacid dehydrogenase family. PdxB subfamily.</text>
</comment>
<dbReference type="EC" id="1.1.1.290" evidence="1"/>
<dbReference type="EMBL" id="CP000802">
    <property type="protein sequence ID" value="ABV06743.1"/>
    <property type="molecule type" value="Genomic_DNA"/>
</dbReference>
<dbReference type="RefSeq" id="WP_000699121.1">
    <property type="nucleotide sequence ID" value="NC_009800.1"/>
</dbReference>
<dbReference type="SMR" id="A8A2I9"/>
<dbReference type="GeneID" id="93774854"/>
<dbReference type="KEGG" id="ecx:EcHS_A2471"/>
<dbReference type="HOGENOM" id="CLU_019796_4_0_6"/>
<dbReference type="UniPathway" id="UPA00244">
    <property type="reaction ID" value="UER00310"/>
</dbReference>
<dbReference type="GO" id="GO:0005829">
    <property type="term" value="C:cytosol"/>
    <property type="evidence" value="ECO:0007669"/>
    <property type="project" value="UniProtKB-ARBA"/>
</dbReference>
<dbReference type="GO" id="GO:0033711">
    <property type="term" value="F:4-phosphoerythronate dehydrogenase activity"/>
    <property type="evidence" value="ECO:0007669"/>
    <property type="project" value="UniProtKB-EC"/>
</dbReference>
<dbReference type="GO" id="GO:0051287">
    <property type="term" value="F:NAD binding"/>
    <property type="evidence" value="ECO:0007669"/>
    <property type="project" value="InterPro"/>
</dbReference>
<dbReference type="GO" id="GO:0046983">
    <property type="term" value="F:protein dimerization activity"/>
    <property type="evidence" value="ECO:0007669"/>
    <property type="project" value="InterPro"/>
</dbReference>
<dbReference type="GO" id="GO:0036001">
    <property type="term" value="P:'de novo' pyridoxal 5'-phosphate biosynthetic process"/>
    <property type="evidence" value="ECO:0007669"/>
    <property type="project" value="TreeGrafter"/>
</dbReference>
<dbReference type="GO" id="GO:0008615">
    <property type="term" value="P:pyridoxine biosynthetic process"/>
    <property type="evidence" value="ECO:0007669"/>
    <property type="project" value="UniProtKB-UniRule"/>
</dbReference>
<dbReference type="CDD" id="cd12158">
    <property type="entry name" value="ErythrP_dh"/>
    <property type="match status" value="1"/>
</dbReference>
<dbReference type="FunFam" id="3.30.1370.170:FF:000001">
    <property type="entry name" value="Erythronate-4-phosphate dehydrogenase"/>
    <property type="match status" value="1"/>
</dbReference>
<dbReference type="FunFam" id="3.40.50.720:FF:000093">
    <property type="entry name" value="Erythronate-4-phosphate dehydrogenase"/>
    <property type="match status" value="1"/>
</dbReference>
<dbReference type="Gene3D" id="3.30.1370.170">
    <property type="match status" value="1"/>
</dbReference>
<dbReference type="Gene3D" id="3.40.50.720">
    <property type="entry name" value="NAD(P)-binding Rossmann-like Domain"/>
    <property type="match status" value="2"/>
</dbReference>
<dbReference type="HAMAP" id="MF_01825">
    <property type="entry name" value="PdxB"/>
    <property type="match status" value="1"/>
</dbReference>
<dbReference type="InterPro" id="IPR006139">
    <property type="entry name" value="D-isomer_2_OHA_DH_cat_dom"/>
</dbReference>
<dbReference type="InterPro" id="IPR029753">
    <property type="entry name" value="D-isomer_DH_CS"/>
</dbReference>
<dbReference type="InterPro" id="IPR029752">
    <property type="entry name" value="D-isomer_DH_CS1"/>
</dbReference>
<dbReference type="InterPro" id="IPR006140">
    <property type="entry name" value="D-isomer_DH_NAD-bd"/>
</dbReference>
<dbReference type="InterPro" id="IPR020921">
    <property type="entry name" value="Erythronate-4-P_DHase"/>
</dbReference>
<dbReference type="InterPro" id="IPR024531">
    <property type="entry name" value="Erythronate-4-P_DHase_dimer"/>
</dbReference>
<dbReference type="InterPro" id="IPR036291">
    <property type="entry name" value="NAD(P)-bd_dom_sf"/>
</dbReference>
<dbReference type="InterPro" id="IPR038251">
    <property type="entry name" value="PdxB_dimer_sf"/>
</dbReference>
<dbReference type="NCBIfam" id="NF001309">
    <property type="entry name" value="PRK00257.1"/>
    <property type="match status" value="1"/>
</dbReference>
<dbReference type="NCBIfam" id="NF011966">
    <property type="entry name" value="PRK15438.1"/>
    <property type="match status" value="1"/>
</dbReference>
<dbReference type="PANTHER" id="PTHR42938">
    <property type="entry name" value="FORMATE DEHYDROGENASE 1"/>
    <property type="match status" value="1"/>
</dbReference>
<dbReference type="PANTHER" id="PTHR42938:SF9">
    <property type="entry name" value="FORMATE DEHYDROGENASE 1"/>
    <property type="match status" value="1"/>
</dbReference>
<dbReference type="Pfam" id="PF00389">
    <property type="entry name" value="2-Hacid_dh"/>
    <property type="match status" value="1"/>
</dbReference>
<dbReference type="Pfam" id="PF02826">
    <property type="entry name" value="2-Hacid_dh_C"/>
    <property type="match status" value="1"/>
</dbReference>
<dbReference type="Pfam" id="PF11890">
    <property type="entry name" value="DUF3410"/>
    <property type="match status" value="1"/>
</dbReference>
<dbReference type="SUPFAM" id="SSF52283">
    <property type="entry name" value="Formate/glycerate dehydrogenase catalytic domain-like"/>
    <property type="match status" value="1"/>
</dbReference>
<dbReference type="SUPFAM" id="SSF51735">
    <property type="entry name" value="NAD(P)-binding Rossmann-fold domains"/>
    <property type="match status" value="1"/>
</dbReference>
<dbReference type="PROSITE" id="PS00065">
    <property type="entry name" value="D_2_HYDROXYACID_DH_1"/>
    <property type="match status" value="1"/>
</dbReference>
<dbReference type="PROSITE" id="PS00671">
    <property type="entry name" value="D_2_HYDROXYACID_DH_3"/>
    <property type="match status" value="1"/>
</dbReference>
<feature type="chain" id="PRO_1000088418" description="Erythronate-4-phosphate dehydrogenase">
    <location>
        <begin position="1"/>
        <end position="378"/>
    </location>
</feature>
<feature type="active site" evidence="1">
    <location>
        <position position="208"/>
    </location>
</feature>
<feature type="active site" evidence="1">
    <location>
        <position position="237"/>
    </location>
</feature>
<feature type="active site" description="Proton donor" evidence="1">
    <location>
        <position position="254"/>
    </location>
</feature>
<feature type="binding site" evidence="1">
    <location>
        <position position="45"/>
    </location>
    <ligand>
        <name>substrate</name>
    </ligand>
</feature>
<feature type="binding site" evidence="1">
    <location>
        <position position="66"/>
    </location>
    <ligand>
        <name>substrate</name>
    </ligand>
</feature>
<feature type="binding site" evidence="1">
    <location>
        <position position="146"/>
    </location>
    <ligand>
        <name>NAD(+)</name>
        <dbReference type="ChEBI" id="CHEBI:57540"/>
    </ligand>
</feature>
<feature type="binding site" evidence="1">
    <location>
        <position position="175"/>
    </location>
    <ligand>
        <name>NAD(+)</name>
        <dbReference type="ChEBI" id="CHEBI:57540"/>
    </ligand>
</feature>
<feature type="binding site" evidence="1">
    <location>
        <position position="232"/>
    </location>
    <ligand>
        <name>NAD(+)</name>
        <dbReference type="ChEBI" id="CHEBI:57540"/>
    </ligand>
</feature>
<feature type="binding site" evidence="1">
    <location>
        <position position="257"/>
    </location>
    <ligand>
        <name>NAD(+)</name>
        <dbReference type="ChEBI" id="CHEBI:57540"/>
    </ligand>
</feature>
<feature type="binding site" evidence="1">
    <location>
        <position position="258"/>
    </location>
    <ligand>
        <name>substrate</name>
    </ligand>
</feature>
<sequence>MKILVDENMPYARDLFSRLGEVTAVPGRPIPVAQLADADALMVRSVTKVNESLLAGKPIKFVGTATAGTDHVDEAWLKQAGIGFSAAPGCNAIAVVEYVFSSLLMLAERDGFSLHDRTVGIVGVGNVGRRLQARLEALGIKTLLCDPPRADRGDEGDFRSLDELVQHADILTFHTPLFKDGPYKTLHLADEKLIRSLKPGAILINACRGAVVDNTALLTCLNEGQKLSVVLDVWEGEPELNVELLTKVDIGTPHIAGYTLEGKARGTTQVFEAYSKFIGHEQHVALDTLLPAPEFGRITLHGPLDQPTLKRLVHLVYDVRRDDAPLRKVAGIPGEFDKLRKNYLERREWSSLYVICDDASAASLLCKLGFNAVHHPAR</sequence>
<name>PDXB_ECOHS</name>
<keyword id="KW-0963">Cytoplasm</keyword>
<keyword id="KW-0520">NAD</keyword>
<keyword id="KW-0560">Oxidoreductase</keyword>
<keyword id="KW-0664">Pyridoxine biosynthesis</keyword>
<protein>
    <recommendedName>
        <fullName evidence="1">Erythronate-4-phosphate dehydrogenase</fullName>
        <ecNumber evidence="1">1.1.1.290</ecNumber>
    </recommendedName>
</protein>
<gene>
    <name evidence="1" type="primary">pdxB</name>
    <name type="ordered locus">EcHS_A2471</name>
</gene>
<organism>
    <name type="scientific">Escherichia coli O9:H4 (strain HS)</name>
    <dbReference type="NCBI Taxonomy" id="331112"/>
    <lineage>
        <taxon>Bacteria</taxon>
        <taxon>Pseudomonadati</taxon>
        <taxon>Pseudomonadota</taxon>
        <taxon>Gammaproteobacteria</taxon>
        <taxon>Enterobacterales</taxon>
        <taxon>Enterobacteriaceae</taxon>
        <taxon>Escherichia</taxon>
    </lineage>
</organism>
<evidence type="ECO:0000255" key="1">
    <source>
        <dbReference type="HAMAP-Rule" id="MF_01825"/>
    </source>
</evidence>